<proteinExistence type="evidence at transcript level"/>
<feature type="transit peptide" description="Chloroplast" evidence="1">
    <location>
        <begin position="1"/>
        <end position="52"/>
    </location>
</feature>
<feature type="chain" id="PRO_0000001705" description="Allene oxide cyclase 4, chloroplastic">
    <location>
        <begin position="53"/>
        <end position="254"/>
    </location>
</feature>
<gene>
    <name type="primary">AOC4</name>
    <name type="ordered locus">At1g13280</name>
    <name type="ORF">T6J4.4</name>
    <name type="ORF">T6J4_23</name>
</gene>
<comment type="function">
    <text>Involved in the production of 12-oxo-phytodienoic acid (OPDA), a precursor of jasmonic acid.</text>
</comment>
<comment type="catalytic activity">
    <reaction>
        <text>(9Z,13S,15Z)-12,13-epoxyoctadeca-9,11,15-trienoate = (9S,13S,15Z)-12-oxophyto-10,15-dienoate</text>
        <dbReference type="Rhea" id="RHEA:22592"/>
        <dbReference type="ChEBI" id="CHEBI:36438"/>
        <dbReference type="ChEBI" id="CHEBI:57411"/>
        <dbReference type="EC" id="5.3.99.6"/>
    </reaction>
</comment>
<comment type="subcellular location">
    <subcellularLocation>
        <location evidence="2">Plastid</location>
        <location evidence="2">Chloroplast</location>
    </subcellularLocation>
</comment>
<comment type="tissue specificity">
    <text evidence="2">Highly expressed in fully developed leaves.</text>
</comment>
<comment type="induction">
    <text evidence="2">Low local and systemic induction by wounding.</text>
</comment>
<comment type="miscellaneous">
    <text>The four allene oxide cyclase proteins (AOC1, AOC2, AOC3 and AOC4) are encoded by duplicated genes. They are very similar, and most experiments involving antibodies do not discriminate between the different members.</text>
</comment>
<comment type="similarity">
    <text evidence="3">Belongs to the allene oxide cyclase family.</text>
</comment>
<comment type="sequence caution" evidence="3">
    <conflict type="erroneous gene model prediction">
        <sequence resource="EMBL-CDS" id="AAG09557"/>
    </conflict>
</comment>
<accession>Q93ZC5</accession>
<accession>Q9FX69</accession>
<organism>
    <name type="scientific">Arabidopsis thaliana</name>
    <name type="common">Mouse-ear cress</name>
    <dbReference type="NCBI Taxonomy" id="3702"/>
    <lineage>
        <taxon>Eukaryota</taxon>
        <taxon>Viridiplantae</taxon>
        <taxon>Streptophyta</taxon>
        <taxon>Embryophyta</taxon>
        <taxon>Tracheophyta</taxon>
        <taxon>Spermatophyta</taxon>
        <taxon>Magnoliopsida</taxon>
        <taxon>eudicotyledons</taxon>
        <taxon>Gunneridae</taxon>
        <taxon>Pentapetalae</taxon>
        <taxon>rosids</taxon>
        <taxon>malvids</taxon>
        <taxon>Brassicales</taxon>
        <taxon>Brassicaceae</taxon>
        <taxon>Camelineae</taxon>
        <taxon>Arabidopsis</taxon>
    </lineage>
</organism>
<evidence type="ECO:0000255" key="1"/>
<evidence type="ECO:0000269" key="2">
    <source>
    </source>
</evidence>
<evidence type="ECO:0000305" key="3"/>
<reference key="1">
    <citation type="journal article" date="2003" name="Plant Mol. Biol.">
        <title>Jasmonate biosynthesis and the allene oxide cyclase family of Arabidopsis thaliana.</title>
        <authorList>
            <person name="Stenzel I."/>
            <person name="Hause B."/>
            <person name="Miersch O."/>
            <person name="Kurz T."/>
            <person name="Maucher H."/>
            <person name="Weichart H."/>
            <person name="Ziegler J."/>
            <person name="Feussner I."/>
            <person name="Wasternack C."/>
        </authorList>
    </citation>
    <scope>NUCLEOTIDE SEQUENCE [MRNA]</scope>
    <scope>TISSUE SPECIFICITY</scope>
    <scope>SUBCELLULAR LOCATION</scope>
    <scope>INDUCTION</scope>
    <source>
        <strain>cv. Columbia</strain>
        <tissue>Leaf</tissue>
    </source>
</reference>
<reference key="2">
    <citation type="journal article" date="2000" name="Nature">
        <title>Sequence and analysis of chromosome 1 of the plant Arabidopsis thaliana.</title>
        <authorList>
            <person name="Theologis A."/>
            <person name="Ecker J.R."/>
            <person name="Palm C.J."/>
            <person name="Federspiel N.A."/>
            <person name="Kaul S."/>
            <person name="White O."/>
            <person name="Alonso J."/>
            <person name="Altafi H."/>
            <person name="Araujo R."/>
            <person name="Bowman C.L."/>
            <person name="Brooks S.Y."/>
            <person name="Buehler E."/>
            <person name="Chan A."/>
            <person name="Chao Q."/>
            <person name="Chen H."/>
            <person name="Cheuk R.F."/>
            <person name="Chin C.W."/>
            <person name="Chung M.K."/>
            <person name="Conn L."/>
            <person name="Conway A.B."/>
            <person name="Conway A.R."/>
            <person name="Creasy T.H."/>
            <person name="Dewar K."/>
            <person name="Dunn P."/>
            <person name="Etgu P."/>
            <person name="Feldblyum T.V."/>
            <person name="Feng J.-D."/>
            <person name="Fong B."/>
            <person name="Fujii C.Y."/>
            <person name="Gill J.E."/>
            <person name="Goldsmith A.D."/>
            <person name="Haas B."/>
            <person name="Hansen N.F."/>
            <person name="Hughes B."/>
            <person name="Huizar L."/>
            <person name="Hunter J.L."/>
            <person name="Jenkins J."/>
            <person name="Johnson-Hopson C."/>
            <person name="Khan S."/>
            <person name="Khaykin E."/>
            <person name="Kim C.J."/>
            <person name="Koo H.L."/>
            <person name="Kremenetskaia I."/>
            <person name="Kurtz D.B."/>
            <person name="Kwan A."/>
            <person name="Lam B."/>
            <person name="Langin-Hooper S."/>
            <person name="Lee A."/>
            <person name="Lee J.M."/>
            <person name="Lenz C.A."/>
            <person name="Li J.H."/>
            <person name="Li Y.-P."/>
            <person name="Lin X."/>
            <person name="Liu S.X."/>
            <person name="Liu Z.A."/>
            <person name="Luros J.S."/>
            <person name="Maiti R."/>
            <person name="Marziali A."/>
            <person name="Militscher J."/>
            <person name="Miranda M."/>
            <person name="Nguyen M."/>
            <person name="Nierman W.C."/>
            <person name="Osborne B.I."/>
            <person name="Pai G."/>
            <person name="Peterson J."/>
            <person name="Pham P.K."/>
            <person name="Rizzo M."/>
            <person name="Rooney T."/>
            <person name="Rowley D."/>
            <person name="Sakano H."/>
            <person name="Salzberg S.L."/>
            <person name="Schwartz J.R."/>
            <person name="Shinn P."/>
            <person name="Southwick A.M."/>
            <person name="Sun H."/>
            <person name="Tallon L.J."/>
            <person name="Tambunga G."/>
            <person name="Toriumi M.J."/>
            <person name="Town C.D."/>
            <person name="Utterback T."/>
            <person name="Van Aken S."/>
            <person name="Vaysberg M."/>
            <person name="Vysotskaia V.S."/>
            <person name="Walker M."/>
            <person name="Wu D."/>
            <person name="Yu G."/>
            <person name="Fraser C.M."/>
            <person name="Venter J.C."/>
            <person name="Davis R.W."/>
        </authorList>
    </citation>
    <scope>NUCLEOTIDE SEQUENCE [LARGE SCALE GENOMIC DNA]</scope>
    <source>
        <strain>cv. Columbia</strain>
    </source>
</reference>
<reference key="3">
    <citation type="journal article" date="2017" name="Plant J.">
        <title>Araport11: a complete reannotation of the Arabidopsis thaliana reference genome.</title>
        <authorList>
            <person name="Cheng C.Y."/>
            <person name="Krishnakumar V."/>
            <person name="Chan A.P."/>
            <person name="Thibaud-Nissen F."/>
            <person name="Schobel S."/>
            <person name="Town C.D."/>
        </authorList>
    </citation>
    <scope>GENOME REANNOTATION</scope>
    <source>
        <strain>cv. Columbia</strain>
    </source>
</reference>
<reference key="4">
    <citation type="journal article" date="2003" name="Science">
        <title>Empirical analysis of transcriptional activity in the Arabidopsis genome.</title>
        <authorList>
            <person name="Yamada K."/>
            <person name="Lim J."/>
            <person name="Dale J.M."/>
            <person name="Chen H."/>
            <person name="Shinn P."/>
            <person name="Palm C.J."/>
            <person name="Southwick A.M."/>
            <person name="Wu H.C."/>
            <person name="Kim C.J."/>
            <person name="Nguyen M."/>
            <person name="Pham P.K."/>
            <person name="Cheuk R.F."/>
            <person name="Karlin-Newmann G."/>
            <person name="Liu S.X."/>
            <person name="Lam B."/>
            <person name="Sakano H."/>
            <person name="Wu T."/>
            <person name="Yu G."/>
            <person name="Miranda M."/>
            <person name="Quach H.L."/>
            <person name="Tripp M."/>
            <person name="Chang C.H."/>
            <person name="Lee J.M."/>
            <person name="Toriumi M.J."/>
            <person name="Chan M.M."/>
            <person name="Tang C.C."/>
            <person name="Onodera C.S."/>
            <person name="Deng J.M."/>
            <person name="Akiyama K."/>
            <person name="Ansari Y."/>
            <person name="Arakawa T."/>
            <person name="Banh J."/>
            <person name="Banno F."/>
            <person name="Bowser L."/>
            <person name="Brooks S.Y."/>
            <person name="Carninci P."/>
            <person name="Chao Q."/>
            <person name="Choy N."/>
            <person name="Enju A."/>
            <person name="Goldsmith A.D."/>
            <person name="Gurjal M."/>
            <person name="Hansen N.F."/>
            <person name="Hayashizaki Y."/>
            <person name="Johnson-Hopson C."/>
            <person name="Hsuan V.W."/>
            <person name="Iida K."/>
            <person name="Karnes M."/>
            <person name="Khan S."/>
            <person name="Koesema E."/>
            <person name="Ishida J."/>
            <person name="Jiang P.X."/>
            <person name="Jones T."/>
            <person name="Kawai J."/>
            <person name="Kamiya A."/>
            <person name="Meyers C."/>
            <person name="Nakajima M."/>
            <person name="Narusaka M."/>
            <person name="Seki M."/>
            <person name="Sakurai T."/>
            <person name="Satou M."/>
            <person name="Tamse R."/>
            <person name="Vaysberg M."/>
            <person name="Wallender E.K."/>
            <person name="Wong C."/>
            <person name="Yamamura Y."/>
            <person name="Yuan S."/>
            <person name="Shinozaki K."/>
            <person name="Davis R.W."/>
            <person name="Theologis A."/>
            <person name="Ecker J.R."/>
        </authorList>
    </citation>
    <scope>NUCLEOTIDE SEQUENCE [LARGE SCALE MRNA]</scope>
    <source>
        <strain>cv. Columbia</strain>
    </source>
</reference>
<sequence length="254" mass="27809">MIMASSAAASISMITLRNLSRNHQSHQSTFLGFSRSFHNQRISSNSPGLSTRARSTTSSTGGFFRTICSSSSNDYSRPTKIQELNVYEFNEGDRNSPAVLKLGKKPDQLCLGDLVPFTNKLYTGDLTKRIGITAGLCVLIQHVPEKKGDRFEASYSFYFGDYGHISVQGPYLTYEDTFLAITGGSGVFEGAYGQVKLRQLVYPTKLFYTFYLKGVAADLPVELTGKHVEPSKEVKPAAEAQATQPGATIANFTN</sequence>
<name>AOC4_ARATH</name>
<keyword id="KW-0150">Chloroplast</keyword>
<keyword id="KW-0413">Isomerase</keyword>
<keyword id="KW-0934">Plastid</keyword>
<keyword id="KW-1185">Reference proteome</keyword>
<keyword id="KW-0809">Transit peptide</keyword>
<protein>
    <recommendedName>
        <fullName>Allene oxide cyclase 4, chloroplastic</fullName>
        <ecNumber>5.3.99.6</ecNumber>
    </recommendedName>
</protein>
<dbReference type="EC" id="5.3.99.6"/>
<dbReference type="EMBL" id="AJ308486">
    <property type="protein sequence ID" value="CAC83764.1"/>
    <property type="molecule type" value="mRNA"/>
</dbReference>
<dbReference type="EMBL" id="AC011810">
    <property type="protein sequence ID" value="AAG09557.1"/>
    <property type="status" value="ALT_SEQ"/>
    <property type="molecule type" value="Genomic_DNA"/>
</dbReference>
<dbReference type="EMBL" id="CP002684">
    <property type="protein sequence ID" value="AEE28994.1"/>
    <property type="molecule type" value="Genomic_DNA"/>
</dbReference>
<dbReference type="EMBL" id="AY141993">
    <property type="protein sequence ID" value="AAM98257.1"/>
    <property type="molecule type" value="mRNA"/>
</dbReference>
<dbReference type="EMBL" id="AY057636">
    <property type="protein sequence ID" value="AAL15267.1"/>
    <property type="molecule type" value="mRNA"/>
</dbReference>
<dbReference type="PIR" id="D86267">
    <property type="entry name" value="D86267"/>
</dbReference>
<dbReference type="RefSeq" id="NP_172786.1">
    <property type="nucleotide sequence ID" value="NM_101199.4"/>
</dbReference>
<dbReference type="SMR" id="Q93ZC5"/>
<dbReference type="BioGRID" id="23128">
    <property type="interactions" value="1"/>
</dbReference>
<dbReference type="FunCoup" id="Q93ZC5">
    <property type="interactions" value="713"/>
</dbReference>
<dbReference type="STRING" id="3702.Q93ZC5"/>
<dbReference type="SwissPalm" id="Q93ZC5"/>
<dbReference type="PaxDb" id="3702-AT1G13280.1"/>
<dbReference type="ProteomicsDB" id="244470"/>
<dbReference type="DNASU" id="837888"/>
<dbReference type="EnsemblPlants" id="AT1G13280.1">
    <property type="protein sequence ID" value="AT1G13280.1"/>
    <property type="gene ID" value="AT1G13280"/>
</dbReference>
<dbReference type="GeneID" id="837888"/>
<dbReference type="Gramene" id="AT1G13280.1">
    <property type="protein sequence ID" value="AT1G13280.1"/>
    <property type="gene ID" value="AT1G13280"/>
</dbReference>
<dbReference type="KEGG" id="ath:AT1G13280"/>
<dbReference type="Araport" id="AT1G13280"/>
<dbReference type="TAIR" id="AT1G13280">
    <property type="gene designation" value="AOC4"/>
</dbReference>
<dbReference type="eggNOG" id="ENOG502QPP8">
    <property type="taxonomic scope" value="Eukaryota"/>
</dbReference>
<dbReference type="HOGENOM" id="CLU_069000_0_0_1"/>
<dbReference type="InParanoid" id="Q93ZC5"/>
<dbReference type="OMA" id="CEPQATI"/>
<dbReference type="PhylomeDB" id="Q93ZC5"/>
<dbReference type="BioCyc" id="ARA:AT1G13280-MONOMER"/>
<dbReference type="BRENDA" id="5.3.99.6">
    <property type="organism ID" value="399"/>
</dbReference>
<dbReference type="PRO" id="PR:Q93ZC5"/>
<dbReference type="Proteomes" id="UP000006548">
    <property type="component" value="Chromosome 1"/>
</dbReference>
<dbReference type="ExpressionAtlas" id="Q93ZC5">
    <property type="expression patterns" value="baseline and differential"/>
</dbReference>
<dbReference type="GO" id="GO:0009507">
    <property type="term" value="C:chloroplast"/>
    <property type="evidence" value="ECO:0007005"/>
    <property type="project" value="TAIR"/>
</dbReference>
<dbReference type="GO" id="GO:0005576">
    <property type="term" value="C:extracellular region"/>
    <property type="evidence" value="ECO:0007005"/>
    <property type="project" value="TAIR"/>
</dbReference>
<dbReference type="GO" id="GO:0005886">
    <property type="term" value="C:plasma membrane"/>
    <property type="evidence" value="ECO:0007005"/>
    <property type="project" value="TAIR"/>
</dbReference>
<dbReference type="GO" id="GO:0046423">
    <property type="term" value="F:allene-oxide cyclase activity"/>
    <property type="evidence" value="ECO:0000250"/>
    <property type="project" value="TAIR"/>
</dbReference>
<dbReference type="GO" id="GO:0009695">
    <property type="term" value="P:jasmonic acid biosynthetic process"/>
    <property type="evidence" value="ECO:0000304"/>
    <property type="project" value="TAIR"/>
</dbReference>
<dbReference type="FunFam" id="2.40.480.10:FF:000001">
    <property type="entry name" value="Allene oxide cyclase, chloroplastic"/>
    <property type="match status" value="1"/>
</dbReference>
<dbReference type="Gene3D" id="2.40.480.10">
    <property type="entry name" value="Allene oxide cyclase-like"/>
    <property type="match status" value="1"/>
</dbReference>
<dbReference type="InterPro" id="IPR009410">
    <property type="entry name" value="Allene_ox_cyc"/>
</dbReference>
<dbReference type="InterPro" id="IPR044859">
    <property type="entry name" value="Allene_oxi_cyc_Dirigent"/>
</dbReference>
<dbReference type="InterPro" id="IPR034871">
    <property type="entry name" value="Allene_oxi_cyc_sf"/>
</dbReference>
<dbReference type="PANTHER" id="PTHR31843">
    <property type="entry name" value="ALLENE OXIDE CYCLASE 4, CHLOROPLASTIC"/>
    <property type="match status" value="1"/>
</dbReference>
<dbReference type="PANTHER" id="PTHR31843:SF11">
    <property type="entry name" value="ALLENE OXIDE CYCLASE 4, CHLOROPLASTIC"/>
    <property type="match status" value="1"/>
</dbReference>
<dbReference type="Pfam" id="PF06351">
    <property type="entry name" value="Allene_ox_cyc"/>
    <property type="match status" value="1"/>
</dbReference>
<dbReference type="SUPFAM" id="SSF141493">
    <property type="entry name" value="Allene oxide cyclase-like"/>
    <property type="match status" value="1"/>
</dbReference>